<evidence type="ECO:0000255" key="1">
    <source>
        <dbReference type="HAMAP-Rule" id="MF_01341"/>
    </source>
</evidence>
<evidence type="ECO:0000256" key="2">
    <source>
        <dbReference type="SAM" id="MobiDB-lite"/>
    </source>
</evidence>
<evidence type="ECO:0000305" key="3"/>
<accession>B5YTM2</accession>
<dbReference type="EMBL" id="CP001164">
    <property type="protein sequence ID" value="ACI34917.1"/>
    <property type="molecule type" value="Genomic_DNA"/>
</dbReference>
<dbReference type="RefSeq" id="WP_001238917.1">
    <property type="nucleotide sequence ID" value="NC_011353.1"/>
</dbReference>
<dbReference type="SMR" id="B5YTM2"/>
<dbReference type="GeneID" id="93778686"/>
<dbReference type="KEGG" id="ecf:ECH74115_4624"/>
<dbReference type="HOGENOM" id="CLU_055188_4_2_6"/>
<dbReference type="GO" id="GO:0022625">
    <property type="term" value="C:cytosolic large ribosomal subunit"/>
    <property type="evidence" value="ECO:0007669"/>
    <property type="project" value="TreeGrafter"/>
</dbReference>
<dbReference type="GO" id="GO:0019843">
    <property type="term" value="F:rRNA binding"/>
    <property type="evidence" value="ECO:0007669"/>
    <property type="project" value="UniProtKB-UniRule"/>
</dbReference>
<dbReference type="GO" id="GO:0003735">
    <property type="term" value="F:structural constituent of ribosome"/>
    <property type="evidence" value="ECO:0007669"/>
    <property type="project" value="InterPro"/>
</dbReference>
<dbReference type="GO" id="GO:0006412">
    <property type="term" value="P:translation"/>
    <property type="evidence" value="ECO:0007669"/>
    <property type="project" value="UniProtKB-UniRule"/>
</dbReference>
<dbReference type="FunFam" id="3.100.10.10:FF:000003">
    <property type="entry name" value="50S ribosomal protein L15"/>
    <property type="match status" value="1"/>
</dbReference>
<dbReference type="Gene3D" id="3.100.10.10">
    <property type="match status" value="1"/>
</dbReference>
<dbReference type="HAMAP" id="MF_01341">
    <property type="entry name" value="Ribosomal_uL15"/>
    <property type="match status" value="1"/>
</dbReference>
<dbReference type="InterPro" id="IPR030878">
    <property type="entry name" value="Ribosomal_uL15"/>
</dbReference>
<dbReference type="InterPro" id="IPR021131">
    <property type="entry name" value="Ribosomal_uL15/eL18"/>
</dbReference>
<dbReference type="InterPro" id="IPR036227">
    <property type="entry name" value="Ribosomal_uL15/eL18_sf"/>
</dbReference>
<dbReference type="InterPro" id="IPR005749">
    <property type="entry name" value="Ribosomal_uL15_bac-type"/>
</dbReference>
<dbReference type="InterPro" id="IPR001196">
    <property type="entry name" value="Ribosomal_uL15_CS"/>
</dbReference>
<dbReference type="NCBIfam" id="TIGR01071">
    <property type="entry name" value="rplO_bact"/>
    <property type="match status" value="1"/>
</dbReference>
<dbReference type="PANTHER" id="PTHR12934">
    <property type="entry name" value="50S RIBOSOMAL PROTEIN L15"/>
    <property type="match status" value="1"/>
</dbReference>
<dbReference type="PANTHER" id="PTHR12934:SF11">
    <property type="entry name" value="LARGE RIBOSOMAL SUBUNIT PROTEIN UL15M"/>
    <property type="match status" value="1"/>
</dbReference>
<dbReference type="Pfam" id="PF00828">
    <property type="entry name" value="Ribosomal_L27A"/>
    <property type="match status" value="1"/>
</dbReference>
<dbReference type="SUPFAM" id="SSF52080">
    <property type="entry name" value="Ribosomal proteins L15p and L18e"/>
    <property type="match status" value="1"/>
</dbReference>
<dbReference type="PROSITE" id="PS00475">
    <property type="entry name" value="RIBOSOMAL_L15"/>
    <property type="match status" value="1"/>
</dbReference>
<organism>
    <name type="scientific">Escherichia coli O157:H7 (strain EC4115 / EHEC)</name>
    <dbReference type="NCBI Taxonomy" id="444450"/>
    <lineage>
        <taxon>Bacteria</taxon>
        <taxon>Pseudomonadati</taxon>
        <taxon>Pseudomonadota</taxon>
        <taxon>Gammaproteobacteria</taxon>
        <taxon>Enterobacterales</taxon>
        <taxon>Enterobacteriaceae</taxon>
        <taxon>Escherichia</taxon>
    </lineage>
</organism>
<name>RL15_ECO5E</name>
<comment type="function">
    <text evidence="1">Binds to the 23S rRNA.</text>
</comment>
<comment type="subunit">
    <text evidence="1">Part of the 50S ribosomal subunit.</text>
</comment>
<comment type="similarity">
    <text evidence="1">Belongs to the universal ribosomal protein uL15 family.</text>
</comment>
<feature type="chain" id="PRO_1000142811" description="Large ribosomal subunit protein uL15">
    <location>
        <begin position="1"/>
        <end position="144"/>
    </location>
</feature>
<feature type="region of interest" description="Disordered" evidence="2">
    <location>
        <begin position="1"/>
        <end position="54"/>
    </location>
</feature>
<feature type="compositionally biased region" description="Gly residues" evidence="2">
    <location>
        <begin position="21"/>
        <end position="31"/>
    </location>
</feature>
<keyword id="KW-0687">Ribonucleoprotein</keyword>
<keyword id="KW-0689">Ribosomal protein</keyword>
<keyword id="KW-0694">RNA-binding</keyword>
<keyword id="KW-0699">rRNA-binding</keyword>
<protein>
    <recommendedName>
        <fullName evidence="1">Large ribosomal subunit protein uL15</fullName>
    </recommendedName>
    <alternativeName>
        <fullName evidence="3">50S ribosomal protein L15</fullName>
    </alternativeName>
</protein>
<sequence length="144" mass="14966">MRLNTLSPAEGSKKAGKRLGRGIGSGLGKTGGRGHKGQKSRSGGGVRRGFEGGQMPLYRRLPKFGFTSRKAAITAEVRLSDLAKVEGGVVDLNTLKAANIIGIQIEFAKVILAGEVTTPVTVRGLRVTKGARAAIEAAGGKIEE</sequence>
<reference key="1">
    <citation type="journal article" date="2011" name="Proc. Natl. Acad. Sci. U.S.A.">
        <title>Genomic anatomy of Escherichia coli O157:H7 outbreaks.</title>
        <authorList>
            <person name="Eppinger M."/>
            <person name="Mammel M.K."/>
            <person name="Leclerc J.E."/>
            <person name="Ravel J."/>
            <person name="Cebula T.A."/>
        </authorList>
    </citation>
    <scope>NUCLEOTIDE SEQUENCE [LARGE SCALE GENOMIC DNA]</scope>
    <source>
        <strain>EC4115 / EHEC</strain>
    </source>
</reference>
<proteinExistence type="inferred from homology"/>
<gene>
    <name evidence="1" type="primary">rplO</name>
    <name type="ordered locus">ECH74115_4624</name>
</gene>